<keyword id="KW-1185">Reference proteome</keyword>
<protein>
    <recommendedName>
        <fullName>Islet cell autoantigen 1-like protein</fullName>
    </recommendedName>
    <alternativeName>
        <fullName>Amyotrophic lateral sclerosis 2 chromosomal region candidate gene 15 protein homolog</fullName>
    </alternativeName>
    <alternativeName>
        <fullName>Ica69-related protein</fullName>
    </alternativeName>
</protein>
<feature type="chain" id="PRO_0000076176" description="Islet cell autoantigen 1-like protein">
    <location>
        <begin position="1"/>
        <end position="431"/>
    </location>
</feature>
<feature type="domain" description="AH" evidence="1">
    <location>
        <begin position="44"/>
        <end position="247"/>
    </location>
</feature>
<feature type="region of interest" description="Disordered" evidence="2">
    <location>
        <begin position="295"/>
        <end position="316"/>
    </location>
</feature>
<feature type="region of interest" description="Disordered" evidence="2">
    <location>
        <begin position="351"/>
        <end position="372"/>
    </location>
</feature>
<feature type="compositionally biased region" description="Basic and acidic residues" evidence="2">
    <location>
        <begin position="301"/>
        <end position="316"/>
    </location>
</feature>
<feature type="compositionally biased region" description="Polar residues" evidence="2">
    <location>
        <begin position="356"/>
        <end position="372"/>
    </location>
</feature>
<feature type="sequence conflict" description="In Ref. 2; AAH79669." evidence="3" ref="2">
    <original>V</original>
    <variation>A</variation>
    <location>
        <position position="29"/>
    </location>
</feature>
<feature type="sequence conflict" description="In Ref. 1; BAB24634." evidence="3" ref="1">
    <original>F</original>
    <variation>I</variation>
    <location>
        <position position="137"/>
    </location>
</feature>
<feature type="sequence conflict" description="In Ref. 1; BAB24634." evidence="3" ref="1">
    <original>Q</original>
    <variation>H</variation>
    <location>
        <position position="244"/>
    </location>
</feature>
<feature type="sequence conflict" description="In Ref. 1; BAC26721." evidence="3" ref="1">
    <original>T</original>
    <variation>S</variation>
    <location>
        <position position="356"/>
    </location>
</feature>
<dbReference type="EMBL" id="AK006525">
    <property type="protein sequence ID" value="BAB24634.1"/>
    <property type="status" value="ALT_INIT"/>
    <property type="molecule type" value="mRNA"/>
</dbReference>
<dbReference type="EMBL" id="AK029991">
    <property type="protein sequence ID" value="BAC26721.1"/>
    <property type="molecule type" value="mRNA"/>
</dbReference>
<dbReference type="EMBL" id="AK158859">
    <property type="protein sequence ID" value="BAE34698.1"/>
    <property type="molecule type" value="mRNA"/>
</dbReference>
<dbReference type="EMBL" id="BC058983">
    <property type="protein sequence ID" value="AAH58983.1"/>
    <property type="molecule type" value="mRNA"/>
</dbReference>
<dbReference type="EMBL" id="BC079669">
    <property type="protein sequence ID" value="AAH79669.1"/>
    <property type="molecule type" value="mRNA"/>
</dbReference>
<dbReference type="CCDS" id="CCDS14987.1"/>
<dbReference type="RefSeq" id="NP_001303623.1">
    <property type="nucleotide sequence ID" value="NM_001316694.2"/>
</dbReference>
<dbReference type="RefSeq" id="NP_001344225.1">
    <property type="nucleotide sequence ID" value="NM_001357296.2"/>
</dbReference>
<dbReference type="RefSeq" id="NP_081683.3">
    <property type="nucleotide sequence ID" value="NM_027407.5"/>
</dbReference>
<dbReference type="RefSeq" id="XP_006496332.1">
    <property type="nucleotide sequence ID" value="XM_006496269.3"/>
</dbReference>
<dbReference type="RefSeq" id="XP_006496333.1">
    <property type="nucleotide sequence ID" value="XM_006496270.3"/>
</dbReference>
<dbReference type="RefSeq" id="XP_011236899.1">
    <property type="nucleotide sequence ID" value="XM_011238597.4"/>
</dbReference>
<dbReference type="SMR" id="Q3TY65"/>
<dbReference type="FunCoup" id="Q3TY65">
    <property type="interactions" value="1129"/>
</dbReference>
<dbReference type="STRING" id="10090.ENSMUSP00000027172"/>
<dbReference type="iPTMnet" id="Q3TY65"/>
<dbReference type="PhosphoSitePlus" id="Q3TY65"/>
<dbReference type="PaxDb" id="10090-ENSMUSP00000027172"/>
<dbReference type="PeptideAtlas" id="Q3TY65"/>
<dbReference type="ProteomicsDB" id="267185"/>
<dbReference type="Antibodypedia" id="34156">
    <property type="antibodies" value="98 antibodies from 20 providers"/>
</dbReference>
<dbReference type="DNASU" id="70375"/>
<dbReference type="Ensembl" id="ENSMUST00000027172.13">
    <property type="protein sequence ID" value="ENSMUSP00000027172.7"/>
    <property type="gene ID" value="ENSMUSG00000026018.13"/>
</dbReference>
<dbReference type="Ensembl" id="ENSMUST00000191251.7">
    <property type="protein sequence ID" value="ENSMUSP00000140520.2"/>
    <property type="gene ID" value="ENSMUSG00000026018.13"/>
</dbReference>
<dbReference type="GeneID" id="70375"/>
<dbReference type="KEGG" id="mmu:70375"/>
<dbReference type="UCSC" id="uc007beb.1">
    <property type="organism name" value="mouse"/>
</dbReference>
<dbReference type="AGR" id="MGI:1917625"/>
<dbReference type="CTD" id="130026"/>
<dbReference type="MGI" id="MGI:1917625">
    <property type="gene designation" value="Ica1l"/>
</dbReference>
<dbReference type="VEuPathDB" id="HostDB:ENSMUSG00000026018"/>
<dbReference type="eggNOG" id="KOG3891">
    <property type="taxonomic scope" value="Eukaryota"/>
</dbReference>
<dbReference type="GeneTree" id="ENSGT00390000005530"/>
<dbReference type="HOGENOM" id="CLU_037158_1_0_1"/>
<dbReference type="InParanoid" id="Q3TY65"/>
<dbReference type="OMA" id="IHEEFTG"/>
<dbReference type="PhylomeDB" id="Q3TY65"/>
<dbReference type="TreeFam" id="TF317186"/>
<dbReference type="BioGRID-ORCS" id="70375">
    <property type="hits" value="2 hits in 77 CRISPR screens"/>
</dbReference>
<dbReference type="ChiTaRS" id="Ica1l">
    <property type="organism name" value="mouse"/>
</dbReference>
<dbReference type="PRO" id="PR:Q3TY65"/>
<dbReference type="Proteomes" id="UP000000589">
    <property type="component" value="Chromosome 1"/>
</dbReference>
<dbReference type="RNAct" id="Q3TY65">
    <property type="molecule type" value="protein"/>
</dbReference>
<dbReference type="Bgee" id="ENSMUSG00000026018">
    <property type="expression patterns" value="Expressed in spermatid and 104 other cell types or tissues"/>
</dbReference>
<dbReference type="ExpressionAtlas" id="Q3TY65">
    <property type="expression patterns" value="baseline and differential"/>
</dbReference>
<dbReference type="GO" id="GO:0001669">
    <property type="term" value="C:acrosomal vesicle"/>
    <property type="evidence" value="ECO:0000314"/>
    <property type="project" value="MGI"/>
</dbReference>
<dbReference type="GO" id="GO:0019904">
    <property type="term" value="F:protein domain specific binding"/>
    <property type="evidence" value="ECO:0007669"/>
    <property type="project" value="InterPro"/>
</dbReference>
<dbReference type="GO" id="GO:0007286">
    <property type="term" value="P:spermatid development"/>
    <property type="evidence" value="ECO:0000315"/>
    <property type="project" value="MGI"/>
</dbReference>
<dbReference type="FunFam" id="1.20.1270.60:FF:000015">
    <property type="entry name" value="Islet cell autoantigen 1, 69kDa"/>
    <property type="match status" value="1"/>
</dbReference>
<dbReference type="Gene3D" id="1.20.1270.60">
    <property type="entry name" value="Arfaptin homology (AH) domain/BAR domain"/>
    <property type="match status" value="1"/>
</dbReference>
<dbReference type="InterPro" id="IPR027267">
    <property type="entry name" value="AH/BAR_dom_sf"/>
</dbReference>
<dbReference type="InterPro" id="IPR010504">
    <property type="entry name" value="AH_dom"/>
</dbReference>
<dbReference type="InterPro" id="IPR024114">
    <property type="entry name" value="Islet_autoAg_Ica1/Ica1-like"/>
</dbReference>
<dbReference type="InterPro" id="IPR006723">
    <property type="entry name" value="Islet_autoAg_Ica1_C"/>
</dbReference>
<dbReference type="PANTHER" id="PTHR10164">
    <property type="entry name" value="ISLET CELL AUTOANTIGEN 1"/>
    <property type="match status" value="1"/>
</dbReference>
<dbReference type="PANTHER" id="PTHR10164:SF5">
    <property type="entry name" value="ISLET CELL AUTOANTIGEN 1-LIKE PROTEIN"/>
    <property type="match status" value="1"/>
</dbReference>
<dbReference type="Pfam" id="PF06456">
    <property type="entry name" value="Arfaptin"/>
    <property type="match status" value="1"/>
</dbReference>
<dbReference type="Pfam" id="PF04629">
    <property type="entry name" value="ICA69"/>
    <property type="match status" value="2"/>
</dbReference>
<dbReference type="SMART" id="SM01015">
    <property type="entry name" value="Arfaptin"/>
    <property type="match status" value="1"/>
</dbReference>
<dbReference type="SMART" id="SM01237">
    <property type="entry name" value="ICA69"/>
    <property type="match status" value="1"/>
</dbReference>
<dbReference type="SUPFAM" id="SSF103657">
    <property type="entry name" value="BAR/IMD domain-like"/>
    <property type="match status" value="1"/>
</dbReference>
<dbReference type="PROSITE" id="PS50870">
    <property type="entry name" value="AH"/>
    <property type="match status" value="1"/>
</dbReference>
<proteinExistence type="evidence at protein level"/>
<gene>
    <name type="primary">Ica1l</name>
    <name type="synonym">Als2cr15</name>
</gene>
<name>ICA1L_MOUSE</name>
<evidence type="ECO:0000255" key="1">
    <source>
        <dbReference type="PROSITE-ProRule" id="PRU00294"/>
    </source>
</evidence>
<evidence type="ECO:0000256" key="2">
    <source>
        <dbReference type="SAM" id="MobiDB-lite"/>
    </source>
</evidence>
<evidence type="ECO:0000305" key="3"/>
<accession>Q3TY65</accession>
<accession>Q6AXB8</accession>
<accession>Q6PD23</accession>
<accession>Q8C0R6</accession>
<accession>Q9D9S5</accession>
<reference key="1">
    <citation type="journal article" date="2005" name="Science">
        <title>The transcriptional landscape of the mammalian genome.</title>
        <authorList>
            <person name="Carninci P."/>
            <person name="Kasukawa T."/>
            <person name="Katayama S."/>
            <person name="Gough J."/>
            <person name="Frith M.C."/>
            <person name="Maeda N."/>
            <person name="Oyama R."/>
            <person name="Ravasi T."/>
            <person name="Lenhard B."/>
            <person name="Wells C."/>
            <person name="Kodzius R."/>
            <person name="Shimokawa K."/>
            <person name="Bajic V.B."/>
            <person name="Brenner S.E."/>
            <person name="Batalov S."/>
            <person name="Forrest A.R."/>
            <person name="Zavolan M."/>
            <person name="Davis M.J."/>
            <person name="Wilming L.G."/>
            <person name="Aidinis V."/>
            <person name="Allen J.E."/>
            <person name="Ambesi-Impiombato A."/>
            <person name="Apweiler R."/>
            <person name="Aturaliya R.N."/>
            <person name="Bailey T.L."/>
            <person name="Bansal M."/>
            <person name="Baxter L."/>
            <person name="Beisel K.W."/>
            <person name="Bersano T."/>
            <person name="Bono H."/>
            <person name="Chalk A.M."/>
            <person name="Chiu K.P."/>
            <person name="Choudhary V."/>
            <person name="Christoffels A."/>
            <person name="Clutterbuck D.R."/>
            <person name="Crowe M.L."/>
            <person name="Dalla E."/>
            <person name="Dalrymple B.P."/>
            <person name="de Bono B."/>
            <person name="Della Gatta G."/>
            <person name="di Bernardo D."/>
            <person name="Down T."/>
            <person name="Engstrom P."/>
            <person name="Fagiolini M."/>
            <person name="Faulkner G."/>
            <person name="Fletcher C.F."/>
            <person name="Fukushima T."/>
            <person name="Furuno M."/>
            <person name="Futaki S."/>
            <person name="Gariboldi M."/>
            <person name="Georgii-Hemming P."/>
            <person name="Gingeras T.R."/>
            <person name="Gojobori T."/>
            <person name="Green R.E."/>
            <person name="Gustincich S."/>
            <person name="Harbers M."/>
            <person name="Hayashi Y."/>
            <person name="Hensch T.K."/>
            <person name="Hirokawa N."/>
            <person name="Hill D."/>
            <person name="Huminiecki L."/>
            <person name="Iacono M."/>
            <person name="Ikeo K."/>
            <person name="Iwama A."/>
            <person name="Ishikawa T."/>
            <person name="Jakt M."/>
            <person name="Kanapin A."/>
            <person name="Katoh M."/>
            <person name="Kawasawa Y."/>
            <person name="Kelso J."/>
            <person name="Kitamura H."/>
            <person name="Kitano H."/>
            <person name="Kollias G."/>
            <person name="Krishnan S.P."/>
            <person name="Kruger A."/>
            <person name="Kummerfeld S.K."/>
            <person name="Kurochkin I.V."/>
            <person name="Lareau L.F."/>
            <person name="Lazarevic D."/>
            <person name="Lipovich L."/>
            <person name="Liu J."/>
            <person name="Liuni S."/>
            <person name="McWilliam S."/>
            <person name="Madan Babu M."/>
            <person name="Madera M."/>
            <person name="Marchionni L."/>
            <person name="Matsuda H."/>
            <person name="Matsuzawa S."/>
            <person name="Miki H."/>
            <person name="Mignone F."/>
            <person name="Miyake S."/>
            <person name="Morris K."/>
            <person name="Mottagui-Tabar S."/>
            <person name="Mulder N."/>
            <person name="Nakano N."/>
            <person name="Nakauchi H."/>
            <person name="Ng P."/>
            <person name="Nilsson R."/>
            <person name="Nishiguchi S."/>
            <person name="Nishikawa S."/>
            <person name="Nori F."/>
            <person name="Ohara O."/>
            <person name="Okazaki Y."/>
            <person name="Orlando V."/>
            <person name="Pang K.C."/>
            <person name="Pavan W.J."/>
            <person name="Pavesi G."/>
            <person name="Pesole G."/>
            <person name="Petrovsky N."/>
            <person name="Piazza S."/>
            <person name="Reed J."/>
            <person name="Reid J.F."/>
            <person name="Ring B.Z."/>
            <person name="Ringwald M."/>
            <person name="Rost B."/>
            <person name="Ruan Y."/>
            <person name="Salzberg S.L."/>
            <person name="Sandelin A."/>
            <person name="Schneider C."/>
            <person name="Schoenbach C."/>
            <person name="Sekiguchi K."/>
            <person name="Semple C.A."/>
            <person name="Seno S."/>
            <person name="Sessa L."/>
            <person name="Sheng Y."/>
            <person name="Shibata Y."/>
            <person name="Shimada H."/>
            <person name="Shimada K."/>
            <person name="Silva D."/>
            <person name="Sinclair B."/>
            <person name="Sperling S."/>
            <person name="Stupka E."/>
            <person name="Sugiura K."/>
            <person name="Sultana R."/>
            <person name="Takenaka Y."/>
            <person name="Taki K."/>
            <person name="Tammoja K."/>
            <person name="Tan S.L."/>
            <person name="Tang S."/>
            <person name="Taylor M.S."/>
            <person name="Tegner J."/>
            <person name="Teichmann S.A."/>
            <person name="Ueda H.R."/>
            <person name="van Nimwegen E."/>
            <person name="Verardo R."/>
            <person name="Wei C.L."/>
            <person name="Yagi K."/>
            <person name="Yamanishi H."/>
            <person name="Zabarovsky E."/>
            <person name="Zhu S."/>
            <person name="Zimmer A."/>
            <person name="Hide W."/>
            <person name="Bult C."/>
            <person name="Grimmond S.M."/>
            <person name="Teasdale R.D."/>
            <person name="Liu E.T."/>
            <person name="Brusic V."/>
            <person name="Quackenbush J."/>
            <person name="Wahlestedt C."/>
            <person name="Mattick J.S."/>
            <person name="Hume D.A."/>
            <person name="Kai C."/>
            <person name="Sasaki D."/>
            <person name="Tomaru Y."/>
            <person name="Fukuda S."/>
            <person name="Kanamori-Katayama M."/>
            <person name="Suzuki M."/>
            <person name="Aoki J."/>
            <person name="Arakawa T."/>
            <person name="Iida J."/>
            <person name="Imamura K."/>
            <person name="Itoh M."/>
            <person name="Kato T."/>
            <person name="Kawaji H."/>
            <person name="Kawagashira N."/>
            <person name="Kawashima T."/>
            <person name="Kojima M."/>
            <person name="Kondo S."/>
            <person name="Konno H."/>
            <person name="Nakano K."/>
            <person name="Ninomiya N."/>
            <person name="Nishio T."/>
            <person name="Okada M."/>
            <person name="Plessy C."/>
            <person name="Shibata K."/>
            <person name="Shiraki T."/>
            <person name="Suzuki S."/>
            <person name="Tagami M."/>
            <person name="Waki K."/>
            <person name="Watahiki A."/>
            <person name="Okamura-Oho Y."/>
            <person name="Suzuki H."/>
            <person name="Kawai J."/>
            <person name="Hayashizaki Y."/>
        </authorList>
    </citation>
    <scope>NUCLEOTIDE SEQUENCE [LARGE SCALE MRNA]</scope>
    <source>
        <strain>C57BL/6J</strain>
        <tissue>Testis</tissue>
        <tissue>Visual cortex</tissue>
    </source>
</reference>
<reference key="2">
    <citation type="journal article" date="2004" name="Genome Res.">
        <title>The status, quality, and expansion of the NIH full-length cDNA project: the Mammalian Gene Collection (MGC).</title>
        <authorList>
            <consortium name="The MGC Project Team"/>
        </authorList>
    </citation>
    <scope>NUCLEOTIDE SEQUENCE [LARGE SCALE MRNA]</scope>
    <source>
        <strain>C57BL/6J</strain>
        <tissue>Embryonic brain</tissue>
    </source>
</reference>
<reference key="3">
    <citation type="journal article" date="2010" name="Cell">
        <title>A tissue-specific atlas of mouse protein phosphorylation and expression.</title>
        <authorList>
            <person name="Huttlin E.L."/>
            <person name="Jedrychowski M.P."/>
            <person name="Elias J.E."/>
            <person name="Goswami T."/>
            <person name="Rad R."/>
            <person name="Beausoleil S.A."/>
            <person name="Villen J."/>
            <person name="Haas W."/>
            <person name="Sowa M.E."/>
            <person name="Gygi S.P."/>
        </authorList>
    </citation>
    <scope>IDENTIFICATION BY MASS SPECTROMETRY [LARGE SCALE ANALYSIS]</scope>
    <source>
        <tissue>Testis</tissue>
    </source>
</reference>
<comment type="sequence caution" evidence="3">
    <conflict type="erroneous initiation">
        <sequence resource="EMBL-CDS" id="BAB24634"/>
    </conflict>
</comment>
<sequence>MDSSEQLRAEDNQSVVSRMQKNYWRTKQVFIKATGKKEDEHVVASDAELDAKLEVFHSIQETCNELVKIVEKYQLRLNVISEEENELGLFLKFQAERDSTQAGEMMDAAGKALCSSAKQRLALCTPLSRLKQEVATFSQRAISDTLVTINRMERARTEYRGALLWMKDASQELDPDTFKQMEKFRKVQNQVRNSKDSFDKLKKDVCQKVDLLGASRCNMLSHSLTTYQRTLLGFWEKTAQMMTQIQEACAGFHPYDFLALKRLQDTPGNLTADCTEGQTEGSCLTTDLNKVALSEEEEEERFEREPAVARALPRDSLEGDDFEKEFSFLNSLLSPTSSSASEFTQECQPACGSPCTGLTSQEPSVGPGSLTSSSQFLPSQLFDLGLHADGAFNTPNNGNQDMSAWFNLFADLGPLSNPDAIGHSDDELLNA</sequence>
<organism>
    <name type="scientific">Mus musculus</name>
    <name type="common">Mouse</name>
    <dbReference type="NCBI Taxonomy" id="10090"/>
    <lineage>
        <taxon>Eukaryota</taxon>
        <taxon>Metazoa</taxon>
        <taxon>Chordata</taxon>
        <taxon>Craniata</taxon>
        <taxon>Vertebrata</taxon>
        <taxon>Euteleostomi</taxon>
        <taxon>Mammalia</taxon>
        <taxon>Eutheria</taxon>
        <taxon>Euarchontoglires</taxon>
        <taxon>Glires</taxon>
        <taxon>Rodentia</taxon>
        <taxon>Myomorpha</taxon>
        <taxon>Muroidea</taxon>
        <taxon>Muridae</taxon>
        <taxon>Murinae</taxon>
        <taxon>Mus</taxon>
        <taxon>Mus</taxon>
    </lineage>
</organism>